<reference key="1">
    <citation type="journal article" date="2001" name="FEBS Lett.">
        <title>Mrp-dependent Na(+)/H(+) antiporters of Bacillus exhibit characteristics that are unanticipated for completely secondary active transporters.</title>
        <authorList>
            <person name="Ito M."/>
            <person name="Guffanti A.A."/>
            <person name="Krulwich T.A."/>
        </authorList>
    </citation>
    <scope>NUCLEOTIDE SEQUENCE [GENOMIC DNA]</scope>
    <scope>CHARACTERIZATION</scope>
</reference>
<reference key="2">
    <citation type="journal article" date="2011" name="Environ. Microbiol.">
        <title>Genome of alkaliphilic Bacillus pseudofirmus OF4 reveals adaptations that support the ability to grow in an external pH range from 7.5 to 11.4.</title>
        <authorList>
            <person name="Janto B."/>
            <person name="Ahmed A."/>
            <person name="Ito M."/>
            <person name="Liu J."/>
            <person name="Hicks D.B."/>
            <person name="Pagni S."/>
            <person name="Fackelmayer O.J."/>
            <person name="Smith T.A."/>
            <person name="Earl J."/>
            <person name="Elbourne L.D."/>
            <person name="Hassan K."/>
            <person name="Paulsen I.T."/>
            <person name="Kolsto A.B."/>
            <person name="Tourasse N.J."/>
            <person name="Ehrlich G.D."/>
            <person name="Boissy R."/>
            <person name="Ivey D.M."/>
            <person name="Li G."/>
            <person name="Xue Y."/>
            <person name="Ma Y."/>
            <person name="Hu F.Z."/>
            <person name="Krulwich T.A."/>
        </authorList>
    </citation>
    <scope>NUCLEOTIDE SEQUENCE [LARGE SCALE GENOMIC DNA]</scope>
    <source>
        <strain>ATCC BAA-2126 / JCM 17055 / OF4</strain>
    </source>
</reference>
<reference key="3">
    <citation type="journal article" date="2007" name="J. Bacteriol.">
        <title>Catalytic properties of Staphylococcus aureus and Bacillus members of the secondary cation/proton antiporter-3 (Mrp) family are revealed by an optimized assay in an Escherichia coli host.</title>
        <authorList>
            <person name="Swartz T.H."/>
            <person name="Ito M."/>
            <person name="Ohira T."/>
            <person name="Natsui S."/>
            <person name="Hicks D.B."/>
            <person name="Krulwich T.A."/>
        </authorList>
    </citation>
    <scope>CHARACTERIZATION</scope>
    <scope>PROBABLE FUNCTION IN ELECTROGENIC ANTIPORTER ACTIVITY</scope>
</reference>
<evidence type="ECO:0000250" key="1"/>
<evidence type="ECO:0000255" key="2"/>
<evidence type="ECO:0000305" key="3"/>
<organism>
    <name type="scientific">Alkalihalophilus pseudofirmus (strain ATCC BAA-2126 / JCM 17055 / OF4)</name>
    <name type="common">Bacillus pseudofirmus</name>
    <dbReference type="NCBI Taxonomy" id="398511"/>
    <lineage>
        <taxon>Bacteria</taxon>
        <taxon>Bacillati</taxon>
        <taxon>Bacillota</taxon>
        <taxon>Bacilli</taxon>
        <taxon>Bacillales</taxon>
        <taxon>Bacillaceae</taxon>
        <taxon>Alkalihalophilus</taxon>
    </lineage>
</organism>
<comment type="function">
    <text>Mnh complex is a Na(+)Li(+)/H(+) antiporter involved in Na(+) and/or Li(+) excretion and Na(+) resistance. Na(+)/H(+) antiport consumes a transmembrane electrical potential, and is thus inferred to be electrogenic. Does not transport K(+), Ca(2+) or Mg(2+).</text>
</comment>
<comment type="subunit">
    <text evidence="1">Forms a heterooligomeric complex that consists of seven subunits: MrpA, MrpB, MrpC, MrpD, MrpE, MrpF and MrpG.</text>
</comment>
<comment type="subcellular location">
    <subcellularLocation>
        <location evidence="3">Cell membrane</location>
        <topology evidence="3">Multi-pass membrane protein</topology>
    </subcellularLocation>
</comment>
<comment type="miscellaneous">
    <text>Mrp-dependent antiport apparently occurs by a secondary, proton motive force-dependent mechanism, but the similarity of several Mrp proteins to membrane-embedded subunits of energy-coupled NADH dehydrogenase complexes raises the possibility that there is a capacity for electron transport that could provide a primary energy coupling option for Mrp functions.</text>
</comment>
<comment type="similarity">
    <text evidence="3">Belongs to the CPA3 antiporters (TC 2.A.63) subunit B family.</text>
</comment>
<name>MRPB_ALKPO</name>
<feature type="chain" id="PRO_0000088863" description="Na(+)/H(+) antiporter subunit B">
    <location>
        <begin position="1"/>
        <end position="144"/>
    </location>
</feature>
<feature type="transmembrane region" description="Helical" evidence="2">
    <location>
        <begin position="9"/>
        <end position="31"/>
    </location>
</feature>
<feature type="transmembrane region" description="Helical" evidence="2">
    <location>
        <begin position="41"/>
        <end position="58"/>
    </location>
</feature>
<feature type="transmembrane region" description="Helical" evidence="2">
    <location>
        <begin position="75"/>
        <end position="97"/>
    </location>
</feature>
<feature type="transmembrane region" description="Helical" evidence="2">
    <location>
        <begin position="117"/>
        <end position="139"/>
    </location>
</feature>
<dbReference type="EMBL" id="AF097740">
    <property type="protein sequence ID" value="AAF21813.1"/>
    <property type="molecule type" value="Genomic_DNA"/>
</dbReference>
<dbReference type="EMBL" id="CP001878">
    <property type="protein sequence ID" value="ADC50692.1"/>
    <property type="molecule type" value="Genomic_DNA"/>
</dbReference>
<dbReference type="RefSeq" id="WP_012958055.1">
    <property type="nucleotide sequence ID" value="NC_013791.2"/>
</dbReference>
<dbReference type="SMR" id="Q9RGZ4"/>
<dbReference type="STRING" id="398511.BpOF4_13205"/>
<dbReference type="KEGG" id="bpf:BpOF4_13205"/>
<dbReference type="eggNOG" id="COG2111">
    <property type="taxonomic scope" value="Bacteria"/>
</dbReference>
<dbReference type="HOGENOM" id="CLU_101659_1_0_9"/>
<dbReference type="Proteomes" id="UP000001544">
    <property type="component" value="Chromosome"/>
</dbReference>
<dbReference type="GO" id="GO:0005886">
    <property type="term" value="C:plasma membrane"/>
    <property type="evidence" value="ECO:0007669"/>
    <property type="project" value="UniProtKB-SubCell"/>
</dbReference>
<dbReference type="GO" id="GO:0015297">
    <property type="term" value="F:antiporter activity"/>
    <property type="evidence" value="ECO:0007669"/>
    <property type="project" value="UniProtKB-KW"/>
</dbReference>
<dbReference type="GO" id="GO:1902600">
    <property type="term" value="P:proton transmembrane transport"/>
    <property type="evidence" value="ECO:0007669"/>
    <property type="project" value="UniProtKB-KW"/>
</dbReference>
<dbReference type="GO" id="GO:0006814">
    <property type="term" value="P:sodium ion transport"/>
    <property type="evidence" value="ECO:0007669"/>
    <property type="project" value="UniProtKB-KW"/>
</dbReference>
<dbReference type="InterPro" id="IPR050622">
    <property type="entry name" value="CPA3_antiporter_subunitB"/>
</dbReference>
<dbReference type="InterPro" id="IPR007182">
    <property type="entry name" value="MnhB"/>
</dbReference>
<dbReference type="NCBIfam" id="NF009223">
    <property type="entry name" value="PRK12573.1"/>
    <property type="match status" value="1"/>
</dbReference>
<dbReference type="PANTHER" id="PTHR33932">
    <property type="entry name" value="NA(+)/H(+) ANTIPORTER SUBUNIT B"/>
    <property type="match status" value="1"/>
</dbReference>
<dbReference type="PANTHER" id="PTHR33932:SF4">
    <property type="entry name" value="NA(+)_H(+) ANTIPORTER SUBUNIT B"/>
    <property type="match status" value="1"/>
</dbReference>
<dbReference type="Pfam" id="PF04039">
    <property type="entry name" value="MnhB"/>
    <property type="match status" value="1"/>
</dbReference>
<gene>
    <name type="primary">mrpB</name>
    <name type="ordered locus">BpOF4_13205</name>
</gene>
<keyword id="KW-0050">Antiport</keyword>
<keyword id="KW-1003">Cell membrane</keyword>
<keyword id="KW-0375">Hydrogen ion transport</keyword>
<keyword id="KW-0406">Ion transport</keyword>
<keyword id="KW-0472">Membrane</keyword>
<keyword id="KW-1185">Reference proteome</keyword>
<keyword id="KW-0915">Sodium</keyword>
<keyword id="KW-0739">Sodium transport</keyword>
<keyword id="KW-0812">Transmembrane</keyword>
<keyword id="KW-1133">Transmembrane helix</keyword>
<keyword id="KW-0813">Transport</keyword>
<sequence length="144" mass="15844">MKNLKSNDVLLHTLTRVVTFIILAFSVYLFFAGHNNPGGGFIGGLMTASALLLMYLGFDMRSIKKAIPFDFTKMIAFGLLIAIFTGFGGLLVGDPYLTQYFEYYQIPILGETELTTALPFDLGIYLVVIGIALTIILTIAEDDM</sequence>
<accession>Q9RGZ4</accession>
<accession>D3FXI1</accession>
<proteinExistence type="evidence at protein level"/>
<protein>
    <recommendedName>
        <fullName>Na(+)/H(+) antiporter subunit B</fullName>
    </recommendedName>
    <alternativeName>
        <fullName>Mrp complex subunit B</fullName>
    </alternativeName>
    <alternativeName>
        <fullName>Multiple resistance and pH homeostasis protein B</fullName>
    </alternativeName>
</protein>